<gene>
    <name type="primary">ND5</name>
    <name type="synonym">NAD5</name>
</gene>
<name>NU5M_ALLMA</name>
<proteinExistence type="inferred from homology"/>
<dbReference type="EC" id="7.1.1.2"/>
<dbReference type="EMBL" id="U17010">
    <property type="protein sequence ID" value="AAB05846.1"/>
    <property type="molecule type" value="Genomic_DNA"/>
</dbReference>
<dbReference type="EMBL" id="U41288">
    <property type="protein sequence ID" value="AAC49228.1"/>
    <property type="molecule type" value="Genomic_DNA"/>
</dbReference>
<dbReference type="PIR" id="S63645">
    <property type="entry name" value="S63645"/>
</dbReference>
<dbReference type="RefSeq" id="NP_043727.1">
    <property type="nucleotide sequence ID" value="NC_001715.1"/>
</dbReference>
<dbReference type="SMR" id="P50365"/>
<dbReference type="GeneID" id="801885"/>
<dbReference type="VEuPathDB" id="FungiDB:AlmafMp08"/>
<dbReference type="GO" id="GO:0005743">
    <property type="term" value="C:mitochondrial inner membrane"/>
    <property type="evidence" value="ECO:0007669"/>
    <property type="project" value="UniProtKB-SubCell"/>
</dbReference>
<dbReference type="GO" id="GO:0008137">
    <property type="term" value="F:NADH dehydrogenase (ubiquinone) activity"/>
    <property type="evidence" value="ECO:0007669"/>
    <property type="project" value="UniProtKB-EC"/>
</dbReference>
<dbReference type="GO" id="GO:0042773">
    <property type="term" value="P:ATP synthesis coupled electron transport"/>
    <property type="evidence" value="ECO:0007669"/>
    <property type="project" value="InterPro"/>
</dbReference>
<dbReference type="GO" id="GO:0015990">
    <property type="term" value="P:electron transport coupled proton transport"/>
    <property type="evidence" value="ECO:0007669"/>
    <property type="project" value="TreeGrafter"/>
</dbReference>
<dbReference type="InterPro" id="IPR010934">
    <property type="entry name" value="NADH_DH_su5_C"/>
</dbReference>
<dbReference type="InterPro" id="IPR018393">
    <property type="entry name" value="NADHpl_OxRdtase_5_subgr"/>
</dbReference>
<dbReference type="InterPro" id="IPR001750">
    <property type="entry name" value="ND/Mrp_TM"/>
</dbReference>
<dbReference type="InterPro" id="IPR003945">
    <property type="entry name" value="NU5C-like"/>
</dbReference>
<dbReference type="InterPro" id="IPR001516">
    <property type="entry name" value="Proton_antipo_N"/>
</dbReference>
<dbReference type="NCBIfam" id="TIGR01974">
    <property type="entry name" value="NDH_I_L"/>
    <property type="match status" value="1"/>
</dbReference>
<dbReference type="NCBIfam" id="NF005141">
    <property type="entry name" value="PRK06590.1"/>
    <property type="match status" value="1"/>
</dbReference>
<dbReference type="PANTHER" id="PTHR42829">
    <property type="entry name" value="NADH-UBIQUINONE OXIDOREDUCTASE CHAIN 5"/>
    <property type="match status" value="1"/>
</dbReference>
<dbReference type="PANTHER" id="PTHR42829:SF2">
    <property type="entry name" value="NADH-UBIQUINONE OXIDOREDUCTASE CHAIN 5"/>
    <property type="match status" value="1"/>
</dbReference>
<dbReference type="Pfam" id="PF06455">
    <property type="entry name" value="NADH5_C"/>
    <property type="match status" value="1"/>
</dbReference>
<dbReference type="Pfam" id="PF00361">
    <property type="entry name" value="Proton_antipo_M"/>
    <property type="match status" value="1"/>
</dbReference>
<dbReference type="Pfam" id="PF00662">
    <property type="entry name" value="Proton_antipo_N"/>
    <property type="match status" value="1"/>
</dbReference>
<dbReference type="PRINTS" id="PR01434">
    <property type="entry name" value="NADHDHGNASE5"/>
</dbReference>
<dbReference type="PRINTS" id="PR01435">
    <property type="entry name" value="NPOXDRDTASE5"/>
</dbReference>
<sequence length="641" mass="70675">MYLTIITLPLFAFLTVGVIGRKLGVRGSQIITSLSIIISAILSLYGFYEIVLLNNLGPITIYLSPWMNVIGAHADWAFYFDSISITMCVVVSSISSLVHLYSIGYMQGDPHIQRFFSYLSLFTFFMLLLVTGNNYLLMFVGWEGIGVSSYLLINFWFTRIQANKASMQAMLVNRVGDLGFVLGLFGIFWLFGSSDYDTVGIIAYKLDEQYITIVTLFLLIAAIGKSAQLGLHTWLPSAMEGPTPVSALIHAATLVTAGVYLILRSSPLFELAPTSLICVCVIGSLTAIFAATTGLFQNDLKRVIAYSTCSQLGYMVFALGLSQYEVAFFHLFNHAYFKALLFLSAGSIIHALHDEQDMRKMGGLVNILPFTYTMILIGSLSLMALPFLTGYYSKDAILEVAYGQFLVTGTFTYWLGTITATITAFYSSKALILGFFGTPNGSKKIYNTIHEAPLIMSIPLFLLSICSIFIGYITNKHLSVIGIGSSGIISGGVGTLRDHYLGFDIEFISTSFGVQFYPLFASLLGISLALIVLKDPKKMHSIEKPEGLLNTVNITRWLSSKSYWFDNVYNTVLISGSLHFGGIFARDIDKGFLSLLGPQGLQQLLITISRFFAIKIDTGFIPHYASIIIIIPIFIILSIFI</sequence>
<accession>P50365</accession>
<protein>
    <recommendedName>
        <fullName>NADH-ubiquinone oxidoreductase chain 5</fullName>
        <ecNumber>7.1.1.2</ecNumber>
    </recommendedName>
    <alternativeName>
        <fullName>NADH dehydrogenase subunit 5</fullName>
    </alternativeName>
</protein>
<feature type="chain" id="PRO_0000118052" description="NADH-ubiquinone oxidoreductase chain 5">
    <location>
        <begin position="1"/>
        <end position="641"/>
    </location>
</feature>
<feature type="transmembrane region" description="Helical" evidence="2">
    <location>
        <begin position="1"/>
        <end position="21"/>
    </location>
</feature>
<feature type="transmembrane region" description="Helical" evidence="2">
    <location>
        <begin position="33"/>
        <end position="53"/>
    </location>
</feature>
<feature type="transmembrane region" description="Helical" evidence="2">
    <location>
        <begin position="59"/>
        <end position="79"/>
    </location>
</feature>
<feature type="transmembrane region" description="Helical" evidence="2">
    <location>
        <begin position="83"/>
        <end position="103"/>
    </location>
</feature>
<feature type="transmembrane region" description="Helical" evidence="2">
    <location>
        <begin position="121"/>
        <end position="141"/>
    </location>
</feature>
<feature type="transmembrane region" description="Helical" evidence="2">
    <location>
        <begin position="175"/>
        <end position="195"/>
    </location>
</feature>
<feature type="transmembrane region" description="Helical" evidence="2">
    <location>
        <begin position="211"/>
        <end position="231"/>
    </location>
</feature>
<feature type="transmembrane region" description="Helical" evidence="2">
    <location>
        <begin position="243"/>
        <end position="263"/>
    </location>
</feature>
<feature type="transmembrane region" description="Helical" evidence="2">
    <location>
        <begin position="276"/>
        <end position="296"/>
    </location>
</feature>
<feature type="transmembrane region" description="Helical" evidence="2">
    <location>
        <begin position="303"/>
        <end position="322"/>
    </location>
</feature>
<feature type="transmembrane region" description="Helical" evidence="2">
    <location>
        <begin position="367"/>
        <end position="387"/>
    </location>
</feature>
<feature type="transmembrane region" description="Helical" evidence="2">
    <location>
        <begin position="405"/>
        <end position="425"/>
    </location>
</feature>
<feature type="transmembrane region" description="Helical" evidence="2">
    <location>
        <begin position="453"/>
        <end position="473"/>
    </location>
</feature>
<feature type="transmembrane region" description="Helical" evidence="2">
    <location>
        <begin position="476"/>
        <end position="496"/>
    </location>
</feature>
<feature type="transmembrane region" description="Helical" evidence="2">
    <location>
        <begin position="512"/>
        <end position="532"/>
    </location>
</feature>
<feature type="transmembrane region" description="Helical" evidence="2">
    <location>
        <begin position="564"/>
        <end position="584"/>
    </location>
</feature>
<feature type="transmembrane region" description="Helical" evidence="2">
    <location>
        <begin position="621"/>
        <end position="641"/>
    </location>
</feature>
<evidence type="ECO:0000250" key="1"/>
<evidence type="ECO:0000255" key="2"/>
<evidence type="ECO:0000305" key="3"/>
<reference key="1">
    <citation type="journal article" date="1995" name="Can. J. Bot.">
        <title>A robust fungal phylogeny using the mitochondrially encoded nad5 protein sequence.</title>
        <authorList>
            <person name="Paquin B."/>
            <person name="Roewer I."/>
            <person name="Wang Z."/>
            <person name="Lang B.F."/>
        </authorList>
    </citation>
    <scope>NUCLEOTIDE SEQUENCE [GENOMIC DNA]</scope>
    <source>
        <strain>ATCC 46923 / Burma 3-35 (35OC)</strain>
    </source>
</reference>
<reference key="2">
    <citation type="journal article" date="1996" name="J. Mol. Biol.">
        <title>The mitochondrial DNA of Allomyces macrogynus: the complete genomic sequence from an ancestral fungus.</title>
        <authorList>
            <person name="Paquin B."/>
            <person name="Lang B.F."/>
        </authorList>
    </citation>
    <scope>NUCLEOTIDE SEQUENCE [GENOMIC DNA]</scope>
    <source>
        <strain>ATCC 46923 / Burma 3-35 (35OC)</strain>
    </source>
</reference>
<geneLocation type="mitochondrion"/>
<keyword id="KW-0249">Electron transport</keyword>
<keyword id="KW-0472">Membrane</keyword>
<keyword id="KW-0496">Mitochondrion</keyword>
<keyword id="KW-0999">Mitochondrion inner membrane</keyword>
<keyword id="KW-0520">NAD</keyword>
<keyword id="KW-0679">Respiratory chain</keyword>
<keyword id="KW-1278">Translocase</keyword>
<keyword id="KW-0812">Transmembrane</keyword>
<keyword id="KW-1133">Transmembrane helix</keyword>
<keyword id="KW-0813">Transport</keyword>
<keyword id="KW-0830">Ubiquinone</keyword>
<comment type="function">
    <text evidence="1">Core subunit of the mitochondrial membrane respiratory chain NADH dehydrogenase (Complex I) that is believed to belong to the minimal assembly required for catalysis. Complex I functions in the transfer of electrons from NADH to the respiratory chain. The immediate electron acceptor for the enzyme is believed to be ubiquinone (By similarity).</text>
</comment>
<comment type="catalytic activity">
    <reaction>
        <text>a ubiquinone + NADH + 5 H(+)(in) = a ubiquinol + NAD(+) + 4 H(+)(out)</text>
        <dbReference type="Rhea" id="RHEA:29091"/>
        <dbReference type="Rhea" id="RHEA-COMP:9565"/>
        <dbReference type="Rhea" id="RHEA-COMP:9566"/>
        <dbReference type="ChEBI" id="CHEBI:15378"/>
        <dbReference type="ChEBI" id="CHEBI:16389"/>
        <dbReference type="ChEBI" id="CHEBI:17976"/>
        <dbReference type="ChEBI" id="CHEBI:57540"/>
        <dbReference type="ChEBI" id="CHEBI:57945"/>
        <dbReference type="EC" id="7.1.1.2"/>
    </reaction>
</comment>
<comment type="subcellular location">
    <subcellularLocation>
        <location evidence="1">Mitochondrion inner membrane</location>
        <topology evidence="1">Multi-pass membrane protein</topology>
    </subcellularLocation>
</comment>
<comment type="similarity">
    <text evidence="3">Belongs to the complex I subunit 5 family.</text>
</comment>
<organism>
    <name type="scientific">Allomyces macrogynus</name>
    <dbReference type="NCBI Taxonomy" id="28583"/>
    <lineage>
        <taxon>Eukaryota</taxon>
        <taxon>Fungi</taxon>
        <taxon>Fungi incertae sedis</taxon>
        <taxon>Blastocladiomycota</taxon>
        <taxon>Blastocladiomycetes</taxon>
        <taxon>Blastocladiales</taxon>
        <taxon>Blastocladiaceae</taxon>
        <taxon>Allomyces</taxon>
    </lineage>
</organism>